<dbReference type="EC" id="7.1.1.2"/>
<dbReference type="EMBL" id="Y09526">
    <property type="protein sequence ID" value="CAA70714.1"/>
    <property type="molecule type" value="Genomic_DNA"/>
</dbReference>
<dbReference type="EMBL" id="Y16067">
    <property type="protein sequence ID" value="CAA76020.1"/>
    <property type="molecule type" value="Genomic_DNA"/>
</dbReference>
<dbReference type="PIR" id="T11301">
    <property type="entry name" value="T11301"/>
</dbReference>
<dbReference type="RefSeq" id="NP_007615.1">
    <property type="nucleotide sequence ID" value="NC_001950.1"/>
</dbReference>
<dbReference type="SMR" id="O21409"/>
<dbReference type="GeneID" id="808291"/>
<dbReference type="CTD" id="4536"/>
<dbReference type="OrthoDB" id="4092844at2759"/>
<dbReference type="GO" id="GO:0005743">
    <property type="term" value="C:mitochondrial inner membrane"/>
    <property type="evidence" value="ECO:0007669"/>
    <property type="project" value="UniProtKB-SubCell"/>
</dbReference>
<dbReference type="GO" id="GO:0008137">
    <property type="term" value="F:NADH dehydrogenase (ubiquinone) activity"/>
    <property type="evidence" value="ECO:0007669"/>
    <property type="project" value="UniProtKB-EC"/>
</dbReference>
<dbReference type="GO" id="GO:0006120">
    <property type="term" value="P:mitochondrial electron transport, NADH to ubiquinone"/>
    <property type="evidence" value="ECO:0007669"/>
    <property type="project" value="InterPro"/>
</dbReference>
<dbReference type="InterPro" id="IPR050175">
    <property type="entry name" value="Complex_I_Subunit_2"/>
</dbReference>
<dbReference type="InterPro" id="IPR010933">
    <property type="entry name" value="NADH_DH_su2_C"/>
</dbReference>
<dbReference type="InterPro" id="IPR003917">
    <property type="entry name" value="NADH_UbQ_OxRdtase_chain2"/>
</dbReference>
<dbReference type="InterPro" id="IPR001750">
    <property type="entry name" value="ND/Mrp_TM"/>
</dbReference>
<dbReference type="PANTHER" id="PTHR46552">
    <property type="entry name" value="NADH-UBIQUINONE OXIDOREDUCTASE CHAIN 2"/>
    <property type="match status" value="1"/>
</dbReference>
<dbReference type="PANTHER" id="PTHR46552:SF1">
    <property type="entry name" value="NADH-UBIQUINONE OXIDOREDUCTASE CHAIN 2"/>
    <property type="match status" value="1"/>
</dbReference>
<dbReference type="Pfam" id="PF06444">
    <property type="entry name" value="NADH_dehy_S2_C"/>
    <property type="match status" value="1"/>
</dbReference>
<dbReference type="Pfam" id="PF00361">
    <property type="entry name" value="Proton_antipo_M"/>
    <property type="match status" value="1"/>
</dbReference>
<dbReference type="PRINTS" id="PR01436">
    <property type="entry name" value="NADHDHGNASE2"/>
</dbReference>
<keyword id="KW-0249">Electron transport</keyword>
<keyword id="KW-0472">Membrane</keyword>
<keyword id="KW-0496">Mitochondrion</keyword>
<keyword id="KW-0999">Mitochondrion inner membrane</keyword>
<keyword id="KW-0520">NAD</keyword>
<keyword id="KW-0679">Respiratory chain</keyword>
<keyword id="KW-1278">Translocase</keyword>
<keyword id="KW-0812">Transmembrane</keyword>
<keyword id="KW-1133">Transmembrane helix</keyword>
<keyword id="KW-0813">Transport</keyword>
<keyword id="KW-0830">Ubiquinone</keyword>
<protein>
    <recommendedName>
        <fullName>NADH-ubiquinone oxidoreductase chain 2</fullName>
        <ecNumber>7.1.1.2</ecNumber>
    </recommendedName>
    <alternativeName>
        <fullName>NADH dehydrogenase subunit 2</fullName>
    </alternativeName>
</protein>
<evidence type="ECO:0000250" key="1"/>
<evidence type="ECO:0000255" key="2"/>
<evidence type="ECO:0000305" key="3"/>
<gene>
    <name type="primary">MT-ND2</name>
    <name type="synonym">MTND2</name>
    <name type="synonym">NADH2</name>
    <name type="synonym">ND2</name>
</gene>
<name>NU2M_SCYCA</name>
<geneLocation type="mitochondrion"/>
<feature type="chain" id="PRO_0000117637" description="NADH-ubiquinone oxidoreductase chain 2">
    <location>
        <begin position="1"/>
        <end position="348"/>
    </location>
</feature>
<feature type="transmembrane region" description="Helical" evidence="2">
    <location>
        <begin position="3"/>
        <end position="23"/>
    </location>
</feature>
<feature type="transmembrane region" description="Helical" evidence="2">
    <location>
        <begin position="25"/>
        <end position="45"/>
    </location>
</feature>
<feature type="transmembrane region" description="Helical" evidence="2">
    <location>
        <begin position="59"/>
        <end position="79"/>
    </location>
</feature>
<feature type="transmembrane region" description="Helical" evidence="2">
    <location>
        <begin position="95"/>
        <end position="115"/>
    </location>
</feature>
<feature type="transmembrane region" description="Helical" evidence="2">
    <location>
        <begin position="149"/>
        <end position="171"/>
    </location>
</feature>
<feature type="transmembrane region" description="Helical" evidence="2">
    <location>
        <begin position="178"/>
        <end position="198"/>
    </location>
</feature>
<feature type="transmembrane region" description="Helical" evidence="2">
    <location>
        <begin position="199"/>
        <end position="219"/>
    </location>
</feature>
<feature type="transmembrane region" description="Helical" evidence="2">
    <location>
        <begin position="242"/>
        <end position="262"/>
    </location>
</feature>
<feature type="transmembrane region" description="Helical" evidence="2">
    <location>
        <begin position="274"/>
        <end position="294"/>
    </location>
</feature>
<feature type="transmembrane region" description="Helical" evidence="2">
    <location>
        <begin position="324"/>
        <end position="344"/>
    </location>
</feature>
<sequence length="348" mass="38136">MNPTVLTIIISSMGLGTTLTFIGSHWLLVWMGLEINTLAIIPLMIRQHHPRAVEATTKYFITQATASALLLFASVTNAWTSGEWSLIEMLNPTSATLATAALALKIGLAPLHFWLPEVLQGLDLTTGLILATWQKLAPFAILLQLSPLLNSNLLLLFGVTSTIVGGWGGLNQTQLRKILAYSSIANLGWMITILHYSPSLTLLNLILYMFMTLTTFLLFKTFNSTKINSISSSTLKSPLMSVIALMTLLSLGGLPPLSGFMPKWLILQELTKQSLIIPATIMALMALLSLFFYLRLCYATTLTKAPGPINMASTWRTKSHQPTLILLTSASISIFMLPMTPLILMLMT</sequence>
<proteinExistence type="inferred from homology"/>
<accession>O21409</accession>
<comment type="function">
    <text evidence="1">Core subunit of the mitochondrial membrane respiratory chain NADH dehydrogenase (Complex I) that is believed to belong to the minimal assembly required for catalysis. Complex I functions in the transfer of electrons from NADH to the respiratory chain. The immediate electron acceptor for the enzyme is believed to be ubiquinone (By similarity).</text>
</comment>
<comment type="catalytic activity">
    <reaction>
        <text>a ubiquinone + NADH + 5 H(+)(in) = a ubiquinol + NAD(+) + 4 H(+)(out)</text>
        <dbReference type="Rhea" id="RHEA:29091"/>
        <dbReference type="Rhea" id="RHEA-COMP:9565"/>
        <dbReference type="Rhea" id="RHEA-COMP:9566"/>
        <dbReference type="ChEBI" id="CHEBI:15378"/>
        <dbReference type="ChEBI" id="CHEBI:16389"/>
        <dbReference type="ChEBI" id="CHEBI:17976"/>
        <dbReference type="ChEBI" id="CHEBI:57540"/>
        <dbReference type="ChEBI" id="CHEBI:57945"/>
        <dbReference type="EC" id="7.1.1.2"/>
    </reaction>
</comment>
<comment type="subcellular location">
    <subcellularLocation>
        <location>Mitochondrion inner membrane</location>
        <topology>Multi-pass membrane protein</topology>
    </subcellularLocation>
</comment>
<comment type="similarity">
    <text evidence="3">Belongs to the complex I subunit 2 family.</text>
</comment>
<reference key="1">
    <citation type="journal article" date="1997" name="Mol. Biol. Evol.">
        <title>The main features of the craniate mitochondrial DNA between the ND1 and the COI genes were established in the common ancestor with the lancelet.</title>
        <authorList>
            <person name="Delarbre C."/>
            <person name="Barriel V."/>
            <person name="Tillier S."/>
            <person name="Janvier P."/>
            <person name="Gachelin G."/>
        </authorList>
    </citation>
    <scope>NUCLEOTIDE SEQUENCE [GENOMIC DNA]</scope>
</reference>
<reference key="2">
    <citation type="journal article" date="1998" name="Genetics">
        <title>The complete nucleotide sequence of the mitochondrial DNA of the dogfish, Scyliorhinus canicula.</title>
        <authorList>
            <person name="Delarbre C."/>
            <person name="Spruyt N."/>
            <person name="Delmarre C."/>
            <person name="Gallut C."/>
            <person name="Barriel V."/>
            <person name="Janvier P."/>
            <person name="Laudet V."/>
            <person name="Gachelin G."/>
        </authorList>
    </citation>
    <scope>NUCLEOTIDE SEQUENCE [GENOMIC DNA]</scope>
    <source>
        <tissue>Muscle</tissue>
    </source>
</reference>
<organism>
    <name type="scientific">Scyliorhinus canicula</name>
    <name type="common">Small-spotted catshark</name>
    <name type="synonym">Squalus canicula</name>
    <dbReference type="NCBI Taxonomy" id="7830"/>
    <lineage>
        <taxon>Eukaryota</taxon>
        <taxon>Metazoa</taxon>
        <taxon>Chordata</taxon>
        <taxon>Craniata</taxon>
        <taxon>Vertebrata</taxon>
        <taxon>Chondrichthyes</taxon>
        <taxon>Elasmobranchii</taxon>
        <taxon>Galeomorphii</taxon>
        <taxon>Galeoidea</taxon>
        <taxon>Carcharhiniformes</taxon>
        <taxon>Scyliorhinidae</taxon>
        <taxon>Scyliorhinus</taxon>
    </lineage>
</organism>